<reference key="1">
    <citation type="submission" date="2005-11" db="EMBL/GenBank/DDBJ databases">
        <title>The complete genome sequence of Lawsonia intracellularis: the causative agent of proliferative enteropathy.</title>
        <authorList>
            <person name="Kaur K."/>
            <person name="Zhang Q."/>
            <person name="Beckler D."/>
            <person name="Munir S."/>
            <person name="Li L."/>
            <person name="Kinsley K."/>
            <person name="Herron L."/>
            <person name="Peterson A."/>
            <person name="May B."/>
            <person name="Singh S."/>
            <person name="Gebhart C."/>
            <person name="Kapur V."/>
        </authorList>
    </citation>
    <scope>NUCLEOTIDE SEQUENCE [LARGE SCALE GENOMIC DNA]</scope>
    <source>
        <strain>PHE/MN1-00</strain>
    </source>
</reference>
<sequence>MRTTFDCIVVGGGHAGCEASMALARLGQKVLLITGNVDRIGHLSCNPAVGGIAKGHIVREIDALGGMMGLWADKAGIQFRTLNRSKGPAVRATRAQVDRDLYMQAVKQDIFSQPNLSVWQDTVEAIIVKDGHTGGVKTALGQLFNSQYVILTTGTFLSGLMHIGQKNFSGGRLGDVGTSKLSSSLHSIGLHLGRLKTGTTPRLLKTSIDFTSMEMQLGDTPIPSFSFHGPKPSQPQVPCYITWTNEYTHDVIRSGMDRSPMFTGVITGTGARYCPSIEDKVARFADRDRHQIFVEPEGLTSQECYINGISTSLPLDIQLALIATIPGLENAHMVRPGYAIEYDYVDPMQLHPTLETKVLPGLWLAGQINGTSGYEEAAGQGLWAALNVFCKITRQEPFILGRDNAYLAVLVDDLVTQGTKEPYRMFTSRAEYRLLLREANADIRLTPLGRKIGLVGDYQWNLFQKKISDIDTLVNRLQNIRIKPDTLDPSIFLELGESIPNRAYTLEELLKRPSITFQTLRKIYSDLPITSEDVYLETETIIKYAGYLDRQEELVQRSAKLEHSYLPKEIDYTKVAGLSSEVIEKLQIVRPQTLGQAGRISGVTPAAITCLEIYLKKIHAFR</sequence>
<dbReference type="EMBL" id="AM180252">
    <property type="protein sequence ID" value="CAJ55000.1"/>
    <property type="molecule type" value="Genomic_DNA"/>
</dbReference>
<dbReference type="RefSeq" id="WP_011527029.1">
    <property type="nucleotide sequence ID" value="NC_008011.1"/>
</dbReference>
<dbReference type="SMR" id="Q1MPS7"/>
<dbReference type="STRING" id="363253.LI0946"/>
<dbReference type="KEGG" id="lip:LI0946"/>
<dbReference type="eggNOG" id="COG0445">
    <property type="taxonomic scope" value="Bacteria"/>
</dbReference>
<dbReference type="HOGENOM" id="CLU_007831_2_2_7"/>
<dbReference type="OrthoDB" id="9815560at2"/>
<dbReference type="Proteomes" id="UP000002430">
    <property type="component" value="Chromosome"/>
</dbReference>
<dbReference type="GO" id="GO:0005829">
    <property type="term" value="C:cytosol"/>
    <property type="evidence" value="ECO:0007669"/>
    <property type="project" value="TreeGrafter"/>
</dbReference>
<dbReference type="GO" id="GO:0050660">
    <property type="term" value="F:flavin adenine dinucleotide binding"/>
    <property type="evidence" value="ECO:0007669"/>
    <property type="project" value="UniProtKB-UniRule"/>
</dbReference>
<dbReference type="GO" id="GO:0030488">
    <property type="term" value="P:tRNA methylation"/>
    <property type="evidence" value="ECO:0007669"/>
    <property type="project" value="TreeGrafter"/>
</dbReference>
<dbReference type="GO" id="GO:0002098">
    <property type="term" value="P:tRNA wobble uridine modification"/>
    <property type="evidence" value="ECO:0007669"/>
    <property type="project" value="InterPro"/>
</dbReference>
<dbReference type="FunFam" id="1.10.150.570:FF:000001">
    <property type="entry name" value="tRNA uridine 5-carboxymethylaminomethyl modification enzyme MnmG"/>
    <property type="match status" value="1"/>
</dbReference>
<dbReference type="FunFam" id="3.50.50.60:FF:000002">
    <property type="entry name" value="tRNA uridine 5-carboxymethylaminomethyl modification enzyme MnmG"/>
    <property type="match status" value="1"/>
</dbReference>
<dbReference type="Gene3D" id="3.50.50.60">
    <property type="entry name" value="FAD/NAD(P)-binding domain"/>
    <property type="match status" value="2"/>
</dbReference>
<dbReference type="Gene3D" id="1.10.150.570">
    <property type="entry name" value="GidA associated domain, C-terminal subdomain"/>
    <property type="match status" value="1"/>
</dbReference>
<dbReference type="Gene3D" id="1.10.10.1800">
    <property type="entry name" value="tRNA uridine 5-carboxymethylaminomethyl modification enzyme MnmG/GidA"/>
    <property type="match status" value="1"/>
</dbReference>
<dbReference type="HAMAP" id="MF_00129">
    <property type="entry name" value="MnmG_GidA"/>
    <property type="match status" value="1"/>
</dbReference>
<dbReference type="InterPro" id="IPR036188">
    <property type="entry name" value="FAD/NAD-bd_sf"/>
</dbReference>
<dbReference type="InterPro" id="IPR049312">
    <property type="entry name" value="GIDA_C_N"/>
</dbReference>
<dbReference type="InterPro" id="IPR004416">
    <property type="entry name" value="MnmG"/>
</dbReference>
<dbReference type="InterPro" id="IPR002218">
    <property type="entry name" value="MnmG-rel"/>
</dbReference>
<dbReference type="InterPro" id="IPR020595">
    <property type="entry name" value="MnmG-rel_CS"/>
</dbReference>
<dbReference type="InterPro" id="IPR026904">
    <property type="entry name" value="MnmG_C"/>
</dbReference>
<dbReference type="InterPro" id="IPR047001">
    <property type="entry name" value="MnmG_C_subdom"/>
</dbReference>
<dbReference type="InterPro" id="IPR044920">
    <property type="entry name" value="MnmG_C_subdom_sf"/>
</dbReference>
<dbReference type="InterPro" id="IPR040131">
    <property type="entry name" value="MnmG_N"/>
</dbReference>
<dbReference type="NCBIfam" id="TIGR00136">
    <property type="entry name" value="mnmG_gidA"/>
    <property type="match status" value="1"/>
</dbReference>
<dbReference type="PANTHER" id="PTHR11806">
    <property type="entry name" value="GLUCOSE INHIBITED DIVISION PROTEIN A"/>
    <property type="match status" value="1"/>
</dbReference>
<dbReference type="PANTHER" id="PTHR11806:SF0">
    <property type="entry name" value="PROTEIN MTO1 HOMOLOG, MITOCHONDRIAL"/>
    <property type="match status" value="1"/>
</dbReference>
<dbReference type="Pfam" id="PF01134">
    <property type="entry name" value="GIDA"/>
    <property type="match status" value="1"/>
</dbReference>
<dbReference type="Pfam" id="PF21680">
    <property type="entry name" value="GIDA_C_1st"/>
    <property type="match status" value="1"/>
</dbReference>
<dbReference type="Pfam" id="PF13932">
    <property type="entry name" value="SAM_GIDA_C"/>
    <property type="match status" value="1"/>
</dbReference>
<dbReference type="SMART" id="SM01228">
    <property type="entry name" value="GIDA_assoc_3"/>
    <property type="match status" value="1"/>
</dbReference>
<dbReference type="SUPFAM" id="SSF51905">
    <property type="entry name" value="FAD/NAD(P)-binding domain"/>
    <property type="match status" value="1"/>
</dbReference>
<dbReference type="PROSITE" id="PS01280">
    <property type="entry name" value="GIDA_1"/>
    <property type="match status" value="1"/>
</dbReference>
<organism>
    <name type="scientific">Lawsonia intracellularis (strain PHE/MN1-00)</name>
    <dbReference type="NCBI Taxonomy" id="363253"/>
    <lineage>
        <taxon>Bacteria</taxon>
        <taxon>Pseudomonadati</taxon>
        <taxon>Thermodesulfobacteriota</taxon>
        <taxon>Desulfovibrionia</taxon>
        <taxon>Desulfovibrionales</taxon>
        <taxon>Desulfovibrionaceae</taxon>
        <taxon>Lawsonia</taxon>
    </lineage>
</organism>
<feature type="chain" id="PRO_0000345287" description="tRNA uridine 5-carboxymethylaminomethyl modification enzyme MnmG">
    <location>
        <begin position="1"/>
        <end position="622"/>
    </location>
</feature>
<feature type="binding site" evidence="1">
    <location>
        <begin position="11"/>
        <end position="16"/>
    </location>
    <ligand>
        <name>FAD</name>
        <dbReference type="ChEBI" id="CHEBI:57692"/>
    </ligand>
</feature>
<feature type="binding site" evidence="1">
    <location>
        <position position="123"/>
    </location>
    <ligand>
        <name>FAD</name>
        <dbReference type="ChEBI" id="CHEBI:57692"/>
    </ligand>
</feature>
<feature type="binding site" evidence="1">
    <location>
        <position position="178"/>
    </location>
    <ligand>
        <name>FAD</name>
        <dbReference type="ChEBI" id="CHEBI:57692"/>
    </ligand>
</feature>
<feature type="binding site" evidence="1">
    <location>
        <begin position="270"/>
        <end position="284"/>
    </location>
    <ligand>
        <name>NAD(+)</name>
        <dbReference type="ChEBI" id="CHEBI:57540"/>
    </ligand>
</feature>
<feature type="binding site" evidence="1">
    <location>
        <position position="367"/>
    </location>
    <ligand>
        <name>FAD</name>
        <dbReference type="ChEBI" id="CHEBI:57692"/>
    </ligand>
</feature>
<proteinExistence type="inferred from homology"/>
<protein>
    <recommendedName>
        <fullName evidence="1">tRNA uridine 5-carboxymethylaminomethyl modification enzyme MnmG</fullName>
    </recommendedName>
    <alternativeName>
        <fullName evidence="1">Glucose-inhibited division protein A</fullName>
    </alternativeName>
</protein>
<gene>
    <name evidence="1" type="primary">mnmG</name>
    <name evidence="1" type="synonym">gidA</name>
    <name type="ordered locus">LI0946</name>
</gene>
<accession>Q1MPS7</accession>
<keyword id="KW-0963">Cytoplasm</keyword>
<keyword id="KW-0274">FAD</keyword>
<keyword id="KW-0285">Flavoprotein</keyword>
<keyword id="KW-0520">NAD</keyword>
<keyword id="KW-1185">Reference proteome</keyword>
<keyword id="KW-0819">tRNA processing</keyword>
<name>MNMG_LAWIP</name>
<comment type="function">
    <text evidence="1">NAD-binding protein involved in the addition of a carboxymethylaminomethyl (cmnm) group at the wobble position (U34) of certain tRNAs, forming tRNA-cmnm(5)s(2)U34.</text>
</comment>
<comment type="cofactor">
    <cofactor evidence="1">
        <name>FAD</name>
        <dbReference type="ChEBI" id="CHEBI:57692"/>
    </cofactor>
</comment>
<comment type="subunit">
    <text evidence="1">Homodimer. Heterotetramer of two MnmE and two MnmG subunits.</text>
</comment>
<comment type="subcellular location">
    <subcellularLocation>
        <location evidence="1">Cytoplasm</location>
    </subcellularLocation>
</comment>
<comment type="similarity">
    <text evidence="1">Belongs to the MnmG family.</text>
</comment>
<evidence type="ECO:0000255" key="1">
    <source>
        <dbReference type="HAMAP-Rule" id="MF_00129"/>
    </source>
</evidence>